<accession>B7UMK0</accession>
<feature type="chain" id="PRO_1000184696" description="ATP synthase subunit delta">
    <location>
        <begin position="1"/>
        <end position="177"/>
    </location>
</feature>
<dbReference type="EMBL" id="FM180568">
    <property type="protein sequence ID" value="CAS11593.1"/>
    <property type="molecule type" value="Genomic_DNA"/>
</dbReference>
<dbReference type="RefSeq" id="WP_001288587.1">
    <property type="nucleotide sequence ID" value="NC_011601.1"/>
</dbReference>
<dbReference type="SMR" id="B7UMK0"/>
<dbReference type="GeneID" id="93778232"/>
<dbReference type="KEGG" id="ecg:E2348C_4045"/>
<dbReference type="HOGENOM" id="CLU_085114_3_0_6"/>
<dbReference type="Proteomes" id="UP000008205">
    <property type="component" value="Chromosome"/>
</dbReference>
<dbReference type="GO" id="GO:0005886">
    <property type="term" value="C:plasma membrane"/>
    <property type="evidence" value="ECO:0007669"/>
    <property type="project" value="UniProtKB-SubCell"/>
</dbReference>
<dbReference type="GO" id="GO:0045259">
    <property type="term" value="C:proton-transporting ATP synthase complex"/>
    <property type="evidence" value="ECO:0007669"/>
    <property type="project" value="UniProtKB-KW"/>
</dbReference>
<dbReference type="GO" id="GO:0046933">
    <property type="term" value="F:proton-transporting ATP synthase activity, rotational mechanism"/>
    <property type="evidence" value="ECO:0007669"/>
    <property type="project" value="UniProtKB-UniRule"/>
</dbReference>
<dbReference type="FunFam" id="1.10.520.20:FF:000001">
    <property type="entry name" value="ATP synthase subunit delta"/>
    <property type="match status" value="1"/>
</dbReference>
<dbReference type="Gene3D" id="1.10.520.20">
    <property type="entry name" value="N-terminal domain of the delta subunit of the F1F0-ATP synthase"/>
    <property type="match status" value="1"/>
</dbReference>
<dbReference type="HAMAP" id="MF_01416">
    <property type="entry name" value="ATP_synth_delta_bact"/>
    <property type="match status" value="1"/>
</dbReference>
<dbReference type="InterPro" id="IPR026015">
    <property type="entry name" value="ATP_synth_OSCP/delta_N_sf"/>
</dbReference>
<dbReference type="InterPro" id="IPR020781">
    <property type="entry name" value="ATPase_OSCP/d_CS"/>
</dbReference>
<dbReference type="InterPro" id="IPR000711">
    <property type="entry name" value="ATPase_OSCP/dsu"/>
</dbReference>
<dbReference type="NCBIfam" id="TIGR01145">
    <property type="entry name" value="ATP_synt_delta"/>
    <property type="match status" value="1"/>
</dbReference>
<dbReference type="NCBIfam" id="NF004402">
    <property type="entry name" value="PRK05758.2-2"/>
    <property type="match status" value="1"/>
</dbReference>
<dbReference type="NCBIfam" id="NF004404">
    <property type="entry name" value="PRK05758.2-5"/>
    <property type="match status" value="1"/>
</dbReference>
<dbReference type="PANTHER" id="PTHR11910">
    <property type="entry name" value="ATP SYNTHASE DELTA CHAIN"/>
    <property type="match status" value="1"/>
</dbReference>
<dbReference type="Pfam" id="PF00213">
    <property type="entry name" value="OSCP"/>
    <property type="match status" value="1"/>
</dbReference>
<dbReference type="PRINTS" id="PR00125">
    <property type="entry name" value="ATPASEDELTA"/>
</dbReference>
<dbReference type="SUPFAM" id="SSF47928">
    <property type="entry name" value="N-terminal domain of the delta subunit of the F1F0-ATP synthase"/>
    <property type="match status" value="1"/>
</dbReference>
<dbReference type="PROSITE" id="PS00389">
    <property type="entry name" value="ATPASE_DELTA"/>
    <property type="match status" value="1"/>
</dbReference>
<name>ATPD_ECO27</name>
<comment type="function">
    <text evidence="1">F(1)F(0) ATP synthase produces ATP from ADP in the presence of a proton or sodium gradient. F-type ATPases consist of two structural domains, F(1) containing the extramembraneous catalytic core and F(0) containing the membrane proton channel, linked together by a central stalk and a peripheral stalk. During catalysis, ATP synthesis in the catalytic domain of F(1) is coupled via a rotary mechanism of the central stalk subunits to proton translocation.</text>
</comment>
<comment type="function">
    <text evidence="1">This protein is part of the stalk that links CF(0) to CF(1). It either transmits conformational changes from CF(0) to CF(1) or is implicated in proton conduction.</text>
</comment>
<comment type="subunit">
    <text evidence="1">F-type ATPases have 2 components, F(1) - the catalytic core - and F(0) - the membrane proton channel. F(1) has five subunits: alpha(3), beta(3), gamma(1), delta(1), epsilon(1). F(0) has three main subunits: a(1), b(2) and c(10-14). The alpha and beta chains form an alternating ring which encloses part of the gamma chain. F(1) is attached to F(0) by a central stalk formed by the gamma and epsilon chains, while a peripheral stalk is formed by the delta and b chains.</text>
</comment>
<comment type="subcellular location">
    <subcellularLocation>
        <location evidence="1">Cell inner membrane</location>
        <topology evidence="1">Peripheral membrane protein</topology>
    </subcellularLocation>
</comment>
<comment type="similarity">
    <text evidence="1">Belongs to the ATPase delta chain family.</text>
</comment>
<proteinExistence type="inferred from homology"/>
<organism>
    <name type="scientific">Escherichia coli O127:H6 (strain E2348/69 / EPEC)</name>
    <dbReference type="NCBI Taxonomy" id="574521"/>
    <lineage>
        <taxon>Bacteria</taxon>
        <taxon>Pseudomonadati</taxon>
        <taxon>Pseudomonadota</taxon>
        <taxon>Gammaproteobacteria</taxon>
        <taxon>Enterobacterales</taxon>
        <taxon>Enterobacteriaceae</taxon>
        <taxon>Escherichia</taxon>
    </lineage>
</organism>
<gene>
    <name evidence="1" type="primary">atpH</name>
    <name type="ordered locus">E2348C_4045</name>
</gene>
<reference key="1">
    <citation type="journal article" date="2009" name="J. Bacteriol.">
        <title>Complete genome sequence and comparative genome analysis of enteropathogenic Escherichia coli O127:H6 strain E2348/69.</title>
        <authorList>
            <person name="Iguchi A."/>
            <person name="Thomson N.R."/>
            <person name="Ogura Y."/>
            <person name="Saunders D."/>
            <person name="Ooka T."/>
            <person name="Henderson I.R."/>
            <person name="Harris D."/>
            <person name="Asadulghani M."/>
            <person name="Kurokawa K."/>
            <person name="Dean P."/>
            <person name="Kenny B."/>
            <person name="Quail M.A."/>
            <person name="Thurston S."/>
            <person name="Dougan G."/>
            <person name="Hayashi T."/>
            <person name="Parkhill J."/>
            <person name="Frankel G."/>
        </authorList>
    </citation>
    <scope>NUCLEOTIDE SEQUENCE [LARGE SCALE GENOMIC DNA]</scope>
    <source>
        <strain>E2348/69 / EPEC</strain>
    </source>
</reference>
<protein>
    <recommendedName>
        <fullName evidence="1">ATP synthase subunit delta</fullName>
    </recommendedName>
    <alternativeName>
        <fullName evidence="1">ATP synthase F(1) sector subunit delta</fullName>
    </alternativeName>
    <alternativeName>
        <fullName evidence="1">F-type ATPase subunit delta</fullName>
        <shortName evidence="1">F-ATPase subunit delta</shortName>
    </alternativeName>
</protein>
<sequence length="177" mass="19332">MSEFITVARPYAKAAFDFAVEHQSVERWQDMLAFAAEVTKNEQMAELLSGALAPETLAESFIAVCGEQLDENGQNLIRVMAENGRLNALPDVLEQFIHLRAVSEATAEVDVISAAALSEQQLAKISAAMEKRLSRKVKLNCKIDKSVMAGVIIRAGDMVIDGSVRGRLERLADVLQS</sequence>
<evidence type="ECO:0000255" key="1">
    <source>
        <dbReference type="HAMAP-Rule" id="MF_01416"/>
    </source>
</evidence>
<keyword id="KW-0066">ATP synthesis</keyword>
<keyword id="KW-0997">Cell inner membrane</keyword>
<keyword id="KW-1003">Cell membrane</keyword>
<keyword id="KW-0139">CF(1)</keyword>
<keyword id="KW-0375">Hydrogen ion transport</keyword>
<keyword id="KW-0406">Ion transport</keyword>
<keyword id="KW-0472">Membrane</keyword>
<keyword id="KW-1185">Reference proteome</keyword>
<keyword id="KW-0813">Transport</keyword>